<protein>
    <recommendedName>
        <fullName>Uterocalin</fullName>
    </recommendedName>
    <alternativeName>
        <fullName>Concepticalin</fullName>
    </alternativeName>
    <alternativeName>
        <fullName>Equicalin</fullName>
    </alternativeName>
    <alternativeName>
        <fullName>Lipocalin P19</fullName>
    </alternativeName>
</protein>
<organism>
    <name type="scientific">Equus caballus</name>
    <name type="common">Horse</name>
    <dbReference type="NCBI Taxonomy" id="9796"/>
    <lineage>
        <taxon>Eukaryota</taxon>
        <taxon>Metazoa</taxon>
        <taxon>Chordata</taxon>
        <taxon>Craniata</taxon>
        <taxon>Vertebrata</taxon>
        <taxon>Euteleostomi</taxon>
        <taxon>Mammalia</taxon>
        <taxon>Eutheria</taxon>
        <taxon>Laurasiatheria</taxon>
        <taxon>Perissodactyla</taxon>
        <taxon>Equidae</taxon>
        <taxon>Equus</taxon>
    </lineage>
</organism>
<feature type="signal peptide" evidence="4">
    <location>
        <begin position="1"/>
        <end position="18"/>
    </location>
</feature>
<feature type="chain" id="PRO_0000249685" description="Uterocalin">
    <location>
        <begin position="19"/>
        <end position="180"/>
    </location>
</feature>
<feature type="glycosylation site" description="N-linked (GlcNAc...) asparagine" evidence="2">
    <location>
        <position position="101"/>
    </location>
</feature>
<feature type="disulfide bond" evidence="1">
    <location>
        <begin position="82"/>
        <end position="175"/>
    </location>
</feature>
<feature type="mutagenesis site" description="No effect." evidence="3">
    <original>W</original>
    <variation>E</variation>
    <location>
        <position position="150"/>
    </location>
</feature>
<comment type="function">
    <text evidence="3 5">Binds fatty acids and retinol. Is specialized for the preattachment embryo. May be important to maintain the pregnancy and may transport small hydrophobic ligands from mother to the developing embryo.</text>
</comment>
<comment type="subcellular location">
    <subcellularLocation>
        <location evidence="4">Secreted</location>
    </subcellularLocation>
</comment>
<comment type="tissue specificity">
    <text evidence="4 5">Expressed in glandular and lumenal epithelia of the endometrium. Is transferred to the embryonic capsule, the conceptus and the yolk sac.</text>
</comment>
<comment type="similarity">
    <text evidence="6">Belongs to the calycin superfamily. Lipocalin family.</text>
</comment>
<proteinExistence type="evidence at protein level"/>
<keyword id="KW-0903">Direct protein sequencing</keyword>
<keyword id="KW-1015">Disulfide bond</keyword>
<keyword id="KW-0325">Glycoprotein</keyword>
<keyword id="KW-1185">Reference proteome</keyword>
<keyword id="KW-0964">Secreted</keyword>
<keyword id="KW-0732">Signal</keyword>
<keyword id="KW-0813">Transport</keyword>
<reference key="1">
    <citation type="journal article" date="1996" name="Biochem. J.">
        <title>A 19 kDa protein secreted bythe endometrium of the mare is a novel member of the lipocalin family.</title>
        <authorList>
            <person name="Crossett B."/>
            <person name="Allen W.R."/>
            <person name="Stewart F."/>
        </authorList>
    </citation>
    <scope>NUCLEOTIDE SEQUENCE [MRNA]</scope>
    <scope>PROTEIN SEQUENCE OF 19-42</scope>
    <scope>TISSUE SPECIFICITY</scope>
    <scope>SUBCELLULAR LOCATION</scope>
    <source>
        <tissue>Endometrium</tissue>
    </source>
</reference>
<reference key="2">
    <citation type="journal article" date="1998" name="Biol. Reprod.">
        <title>Transfer of a uterine lipocalin from the endometrium of the mare to the developing equine conceptus.</title>
        <authorList>
            <person name="Crossett B."/>
            <person name="Suire S."/>
            <person name="Herrler A."/>
            <person name="Allen W.R."/>
            <person name="Stewart F."/>
        </authorList>
    </citation>
    <scope>TISSUE SPECIFICITY</scope>
    <scope>FUNCTION</scope>
</reference>
<reference key="3">
    <citation type="journal article" date="2001" name="Biochem. J.">
        <title>Uterocalin, a lipocalin provisioning the preattachment equine conceptus: fatty acid and retinol binding properties, and structural characterization.</title>
        <authorList>
            <person name="Suire S."/>
            <person name="Stewart F."/>
            <person name="Beauchamp J."/>
            <person name="Kennedy M.W."/>
        </authorList>
    </citation>
    <scope>FUNCTION</scope>
    <scope>MUTAGENESIS OF TRP-150</scope>
</reference>
<name>UCAL_HORSE</name>
<accession>Q28388</accession>
<dbReference type="EMBL" id="X98459">
    <property type="protein sequence ID" value="CAA67099.1"/>
    <property type="molecule type" value="mRNA"/>
</dbReference>
<dbReference type="RefSeq" id="NP_001075978.2">
    <property type="nucleotide sequence ID" value="NM_001082509.2"/>
</dbReference>
<dbReference type="SMR" id="Q28388"/>
<dbReference type="STRING" id="9796.ENSECAP00000050030"/>
<dbReference type="PaxDb" id="9796-ENSECAP00000050030"/>
<dbReference type="GeneID" id="100034213"/>
<dbReference type="KEGG" id="ecb:100034213"/>
<dbReference type="CTD" id="100034213"/>
<dbReference type="InParanoid" id="Q28388"/>
<dbReference type="OrthoDB" id="9048943at2759"/>
<dbReference type="Proteomes" id="UP000002281">
    <property type="component" value="Unplaced"/>
</dbReference>
<dbReference type="GO" id="GO:0005615">
    <property type="term" value="C:extracellular space"/>
    <property type="evidence" value="ECO:0000318"/>
    <property type="project" value="GO_Central"/>
</dbReference>
<dbReference type="GO" id="GO:0036094">
    <property type="term" value="F:small molecule binding"/>
    <property type="evidence" value="ECO:0007669"/>
    <property type="project" value="InterPro"/>
</dbReference>
<dbReference type="Gene3D" id="2.40.128.20">
    <property type="match status" value="1"/>
</dbReference>
<dbReference type="InterPro" id="IPR012674">
    <property type="entry name" value="Calycin"/>
</dbReference>
<dbReference type="InterPro" id="IPR002345">
    <property type="entry name" value="Lipocalin"/>
</dbReference>
<dbReference type="InterPro" id="IPR000566">
    <property type="entry name" value="Lipocln_cytosolic_FA-bd_dom"/>
</dbReference>
<dbReference type="InterPro" id="IPR002971">
    <property type="entry name" value="Maj_urinary"/>
</dbReference>
<dbReference type="PANTHER" id="PTHR11430">
    <property type="entry name" value="LIPOCALIN"/>
    <property type="match status" value="1"/>
</dbReference>
<dbReference type="PANTHER" id="PTHR11430:SF70">
    <property type="entry name" value="UTEROCALIN"/>
    <property type="match status" value="1"/>
</dbReference>
<dbReference type="Pfam" id="PF00061">
    <property type="entry name" value="Lipocalin"/>
    <property type="match status" value="1"/>
</dbReference>
<dbReference type="PRINTS" id="PR01221">
    <property type="entry name" value="MAJORURINARY"/>
</dbReference>
<dbReference type="SUPFAM" id="SSF50814">
    <property type="entry name" value="Lipocalins"/>
    <property type="match status" value="1"/>
</dbReference>
<sequence>MNLLLLAMGLILPRRPHALHMGPGDPNFDEKLVKGKWFSVALASNEPKFIAKDTDMKFFIHKIQVTPESLQFHFHRKVRGMCVPTMMTAHKTKKKFQYTVNHSGHKTIFLEKVDPKHFVIFCAHSMKHGKETVVVTLFSRTPTVSPDVMWMFKKYCKTHGIHTSNIVDLTQTDRCLHARH</sequence>
<evidence type="ECO:0000250" key="1"/>
<evidence type="ECO:0000255" key="2"/>
<evidence type="ECO:0000269" key="3">
    <source>
    </source>
</evidence>
<evidence type="ECO:0000269" key="4">
    <source>
    </source>
</evidence>
<evidence type="ECO:0000269" key="5">
    <source>
    </source>
</evidence>
<evidence type="ECO:0000305" key="6"/>